<evidence type="ECO:0000255" key="1">
    <source>
        <dbReference type="HAMAP-Rule" id="MF_00249"/>
    </source>
</evidence>
<protein>
    <recommendedName>
        <fullName evidence="1">ATP-dependent protease ATPase subunit HslU</fullName>
    </recommendedName>
    <alternativeName>
        <fullName evidence="1">Unfoldase HslU</fullName>
    </alternativeName>
</protein>
<organism>
    <name type="scientific">Colwellia psychrerythraea (strain 34H / ATCC BAA-681)</name>
    <name type="common">Vibrio psychroerythus</name>
    <dbReference type="NCBI Taxonomy" id="167879"/>
    <lineage>
        <taxon>Bacteria</taxon>
        <taxon>Pseudomonadati</taxon>
        <taxon>Pseudomonadota</taxon>
        <taxon>Gammaproteobacteria</taxon>
        <taxon>Alteromonadales</taxon>
        <taxon>Colwelliaceae</taxon>
        <taxon>Colwellia</taxon>
    </lineage>
</organism>
<reference key="1">
    <citation type="journal article" date="2005" name="Proc. Natl. Acad. Sci. U.S.A.">
        <title>The psychrophilic lifestyle as revealed by the genome sequence of Colwellia psychrerythraea 34H through genomic and proteomic analyses.</title>
        <authorList>
            <person name="Methe B.A."/>
            <person name="Nelson K.E."/>
            <person name="Deming J.W."/>
            <person name="Momen B."/>
            <person name="Melamud E."/>
            <person name="Zhang X."/>
            <person name="Moult J."/>
            <person name="Madupu R."/>
            <person name="Nelson W.C."/>
            <person name="Dodson R.J."/>
            <person name="Brinkac L.M."/>
            <person name="Daugherty S.C."/>
            <person name="Durkin A.S."/>
            <person name="DeBoy R.T."/>
            <person name="Kolonay J.F."/>
            <person name="Sullivan S.A."/>
            <person name="Zhou L."/>
            <person name="Davidsen T.M."/>
            <person name="Wu M."/>
            <person name="Huston A.L."/>
            <person name="Lewis M."/>
            <person name="Weaver B."/>
            <person name="Weidman J.F."/>
            <person name="Khouri H."/>
            <person name="Utterback T.R."/>
            <person name="Feldblyum T.V."/>
            <person name="Fraser C.M."/>
        </authorList>
    </citation>
    <scope>NUCLEOTIDE SEQUENCE [LARGE SCALE GENOMIC DNA]</scope>
    <source>
        <strain>34H / ATCC BAA-681</strain>
    </source>
</reference>
<dbReference type="EMBL" id="CP000083">
    <property type="protein sequence ID" value="AAZ24728.1"/>
    <property type="molecule type" value="Genomic_DNA"/>
</dbReference>
<dbReference type="RefSeq" id="WP_011045100.1">
    <property type="nucleotide sequence ID" value="NC_003910.7"/>
</dbReference>
<dbReference type="SMR" id="Q47W03"/>
<dbReference type="STRING" id="167879.CPS_4370"/>
<dbReference type="KEGG" id="cps:CPS_4370"/>
<dbReference type="eggNOG" id="COG1220">
    <property type="taxonomic scope" value="Bacteria"/>
</dbReference>
<dbReference type="HOGENOM" id="CLU_033123_0_0_6"/>
<dbReference type="Proteomes" id="UP000000547">
    <property type="component" value="Chromosome"/>
</dbReference>
<dbReference type="GO" id="GO:0009376">
    <property type="term" value="C:HslUV protease complex"/>
    <property type="evidence" value="ECO:0007669"/>
    <property type="project" value="UniProtKB-UniRule"/>
</dbReference>
<dbReference type="GO" id="GO:0005524">
    <property type="term" value="F:ATP binding"/>
    <property type="evidence" value="ECO:0007669"/>
    <property type="project" value="UniProtKB-UniRule"/>
</dbReference>
<dbReference type="GO" id="GO:0016887">
    <property type="term" value="F:ATP hydrolysis activity"/>
    <property type="evidence" value="ECO:0007669"/>
    <property type="project" value="InterPro"/>
</dbReference>
<dbReference type="GO" id="GO:0008233">
    <property type="term" value="F:peptidase activity"/>
    <property type="evidence" value="ECO:0007669"/>
    <property type="project" value="InterPro"/>
</dbReference>
<dbReference type="GO" id="GO:0036402">
    <property type="term" value="F:proteasome-activating activity"/>
    <property type="evidence" value="ECO:0007669"/>
    <property type="project" value="UniProtKB-UniRule"/>
</dbReference>
<dbReference type="GO" id="GO:0043335">
    <property type="term" value="P:protein unfolding"/>
    <property type="evidence" value="ECO:0007669"/>
    <property type="project" value="UniProtKB-UniRule"/>
</dbReference>
<dbReference type="GO" id="GO:0051603">
    <property type="term" value="P:proteolysis involved in protein catabolic process"/>
    <property type="evidence" value="ECO:0007669"/>
    <property type="project" value="TreeGrafter"/>
</dbReference>
<dbReference type="CDD" id="cd19498">
    <property type="entry name" value="RecA-like_HslU"/>
    <property type="match status" value="1"/>
</dbReference>
<dbReference type="FunFam" id="1.10.8.10:FF:000028">
    <property type="entry name" value="ATP-dependent protease ATPase subunit HslU"/>
    <property type="match status" value="1"/>
</dbReference>
<dbReference type="FunFam" id="3.40.50.300:FF:000213">
    <property type="entry name" value="ATP-dependent protease ATPase subunit HslU"/>
    <property type="match status" value="1"/>
</dbReference>
<dbReference type="FunFam" id="3.40.50.300:FF:000220">
    <property type="entry name" value="ATP-dependent protease ATPase subunit HslU"/>
    <property type="match status" value="1"/>
</dbReference>
<dbReference type="Gene3D" id="1.10.8.60">
    <property type="match status" value="1"/>
</dbReference>
<dbReference type="Gene3D" id="1.10.8.10">
    <property type="entry name" value="DNA helicase RuvA subunit, C-terminal domain"/>
    <property type="match status" value="1"/>
</dbReference>
<dbReference type="Gene3D" id="3.40.50.300">
    <property type="entry name" value="P-loop containing nucleotide triphosphate hydrolases"/>
    <property type="match status" value="2"/>
</dbReference>
<dbReference type="HAMAP" id="MF_00249">
    <property type="entry name" value="HslU"/>
    <property type="match status" value="1"/>
</dbReference>
<dbReference type="InterPro" id="IPR003593">
    <property type="entry name" value="AAA+_ATPase"/>
</dbReference>
<dbReference type="InterPro" id="IPR050052">
    <property type="entry name" value="ATP-dep_Clp_protease_ClpX"/>
</dbReference>
<dbReference type="InterPro" id="IPR003959">
    <property type="entry name" value="ATPase_AAA_core"/>
</dbReference>
<dbReference type="InterPro" id="IPR019489">
    <property type="entry name" value="Clp_ATPase_C"/>
</dbReference>
<dbReference type="InterPro" id="IPR004491">
    <property type="entry name" value="HslU"/>
</dbReference>
<dbReference type="InterPro" id="IPR027417">
    <property type="entry name" value="P-loop_NTPase"/>
</dbReference>
<dbReference type="NCBIfam" id="TIGR00390">
    <property type="entry name" value="hslU"/>
    <property type="match status" value="1"/>
</dbReference>
<dbReference type="NCBIfam" id="NF003544">
    <property type="entry name" value="PRK05201.1"/>
    <property type="match status" value="1"/>
</dbReference>
<dbReference type="PANTHER" id="PTHR48102">
    <property type="entry name" value="ATP-DEPENDENT CLP PROTEASE ATP-BINDING SUBUNIT CLPX-LIKE, MITOCHONDRIAL-RELATED"/>
    <property type="match status" value="1"/>
</dbReference>
<dbReference type="PANTHER" id="PTHR48102:SF3">
    <property type="entry name" value="ATP-DEPENDENT PROTEASE ATPASE SUBUNIT HSLU"/>
    <property type="match status" value="1"/>
</dbReference>
<dbReference type="Pfam" id="PF00004">
    <property type="entry name" value="AAA"/>
    <property type="match status" value="1"/>
</dbReference>
<dbReference type="Pfam" id="PF07724">
    <property type="entry name" value="AAA_2"/>
    <property type="match status" value="1"/>
</dbReference>
<dbReference type="SMART" id="SM00382">
    <property type="entry name" value="AAA"/>
    <property type="match status" value="1"/>
</dbReference>
<dbReference type="SMART" id="SM01086">
    <property type="entry name" value="ClpB_D2-small"/>
    <property type="match status" value="1"/>
</dbReference>
<dbReference type="SUPFAM" id="SSF52540">
    <property type="entry name" value="P-loop containing nucleoside triphosphate hydrolases"/>
    <property type="match status" value="1"/>
</dbReference>
<keyword id="KW-0067">ATP-binding</keyword>
<keyword id="KW-0143">Chaperone</keyword>
<keyword id="KW-0963">Cytoplasm</keyword>
<keyword id="KW-0547">Nucleotide-binding</keyword>
<keyword id="KW-0346">Stress response</keyword>
<gene>
    <name evidence="1" type="primary">hslU</name>
    <name type="ordered locus">CPS_4370</name>
</gene>
<name>HSLU_COLP3</name>
<proteinExistence type="inferred from homology"/>
<sequence>MSNMTPREIVHELDSHIVGQSDAKRAVAIALRNRWRRMQLDKDLRNEVTPKNILMIGPTGVGKTEIARRLAKLAHAPFIKVEATKFTEVGYVGKEVETIIRDLADMAIKMVKESEMDRVKHLAEEAAEERILDVLLPPARDGFGNDEKSDDSNTRQIFRKKLREGKLDDKEIELDLAAPQVGVEIMAPPGMEDMTSQLQNMFQNMSSEKTNKRKLKIKDALKALQEEEAAKIVNQDDIKQKAIDAVEQNGIVFIDEIDKICKRADSSGGGDVSREGVQRDLLPLVEGSTVSTKHGMIKTDHILFIASGAFQMTKPSDLIPELQGRLPIRVELQALTADDFVRILTEPFASLTEQYIALLATEGVSVTFTDDGIKAIADSAWQVNETTENIGARRLHTMMERLVEDLSFNADQRSGETISIDQAYVTKILSEVVKDEDLSRFIL</sequence>
<feature type="chain" id="PRO_1000012729" description="ATP-dependent protease ATPase subunit HslU">
    <location>
        <begin position="1"/>
        <end position="443"/>
    </location>
</feature>
<feature type="binding site" evidence="1">
    <location>
        <position position="18"/>
    </location>
    <ligand>
        <name>ATP</name>
        <dbReference type="ChEBI" id="CHEBI:30616"/>
    </ligand>
</feature>
<feature type="binding site" evidence="1">
    <location>
        <begin position="60"/>
        <end position="65"/>
    </location>
    <ligand>
        <name>ATP</name>
        <dbReference type="ChEBI" id="CHEBI:30616"/>
    </ligand>
</feature>
<feature type="binding site" evidence="1">
    <location>
        <position position="255"/>
    </location>
    <ligand>
        <name>ATP</name>
        <dbReference type="ChEBI" id="CHEBI:30616"/>
    </ligand>
</feature>
<feature type="binding site" evidence="1">
    <location>
        <position position="321"/>
    </location>
    <ligand>
        <name>ATP</name>
        <dbReference type="ChEBI" id="CHEBI:30616"/>
    </ligand>
</feature>
<feature type="binding site" evidence="1">
    <location>
        <position position="393"/>
    </location>
    <ligand>
        <name>ATP</name>
        <dbReference type="ChEBI" id="CHEBI:30616"/>
    </ligand>
</feature>
<accession>Q47W03</accession>
<comment type="function">
    <text evidence="1">ATPase subunit of a proteasome-like degradation complex; this subunit has chaperone activity. The binding of ATP and its subsequent hydrolysis by HslU are essential for unfolding of protein substrates subsequently hydrolyzed by HslV. HslU recognizes the N-terminal part of its protein substrates and unfolds these before they are guided to HslV for hydrolysis.</text>
</comment>
<comment type="subunit">
    <text evidence="1">A double ring-shaped homohexamer of HslV is capped on each side by a ring-shaped HslU homohexamer. The assembly of the HslU/HslV complex is dependent on binding of ATP.</text>
</comment>
<comment type="subcellular location">
    <subcellularLocation>
        <location evidence="1">Cytoplasm</location>
    </subcellularLocation>
</comment>
<comment type="similarity">
    <text evidence="1">Belongs to the ClpX chaperone family. HslU subfamily.</text>
</comment>